<protein>
    <recommendedName>
        <fullName>Uncharacterized protein YebD</fullName>
    </recommendedName>
</protein>
<organism>
    <name type="scientific">Bacillus subtilis (strain 168)</name>
    <dbReference type="NCBI Taxonomy" id="224308"/>
    <lineage>
        <taxon>Bacteria</taxon>
        <taxon>Bacillati</taxon>
        <taxon>Bacillota</taxon>
        <taxon>Bacilli</taxon>
        <taxon>Bacillales</taxon>
        <taxon>Bacillaceae</taxon>
        <taxon>Bacillus</taxon>
    </lineage>
</organism>
<keyword id="KW-1185">Reference proteome</keyword>
<sequence>MADVLRRAINQKKQFLKTKLLLSEFYQGRGEQLADYTLSELEKEYKSLQKMKKEI</sequence>
<evidence type="ECO:0000305" key="1"/>
<accession>O34904</accession>
<gene>
    <name type="primary">yebD</name>
    <name type="ordered locus">BSU06390</name>
</gene>
<name>YEBD_BACSU</name>
<dbReference type="EMBL" id="U51115">
    <property type="protein sequence ID" value="AAB62314.1"/>
    <property type="status" value="ALT_FRAME"/>
    <property type="molecule type" value="Genomic_DNA"/>
</dbReference>
<dbReference type="EMBL" id="AL009126">
    <property type="protein sequence ID" value="CAB12458.3"/>
    <property type="molecule type" value="Genomic_DNA"/>
</dbReference>
<dbReference type="PIR" id="H69791">
    <property type="entry name" value="H69791"/>
</dbReference>
<dbReference type="RefSeq" id="NP_388520.3">
    <property type="nucleotide sequence ID" value="NC_000964.3"/>
</dbReference>
<dbReference type="RefSeq" id="WP_003244066.1">
    <property type="nucleotide sequence ID" value="NZ_OZ025638.1"/>
</dbReference>
<dbReference type="SMR" id="O34904"/>
<dbReference type="FunCoup" id="O34904">
    <property type="interactions" value="7"/>
</dbReference>
<dbReference type="STRING" id="224308.BSU06390"/>
<dbReference type="PaxDb" id="224308-BSU06390"/>
<dbReference type="EnsemblBacteria" id="CAB12458">
    <property type="protein sequence ID" value="CAB12458"/>
    <property type="gene ID" value="BSU_06390"/>
</dbReference>
<dbReference type="GeneID" id="936033"/>
<dbReference type="KEGG" id="bsu:BSU06390"/>
<dbReference type="PATRIC" id="fig|224308.179.peg.695"/>
<dbReference type="InParanoid" id="O34904"/>
<dbReference type="OrthoDB" id="2974077at2"/>
<dbReference type="BioCyc" id="BSUB:BSU06390-MONOMER"/>
<dbReference type="Proteomes" id="UP000001570">
    <property type="component" value="Chromosome"/>
</dbReference>
<dbReference type="InterPro" id="IPR025072">
    <property type="entry name" value="Fur_reg_FbpA"/>
</dbReference>
<dbReference type="Pfam" id="PF13076">
    <property type="entry name" value="Fur_reg_FbpA"/>
    <property type="match status" value="1"/>
</dbReference>
<comment type="sequence caution" evidence="1">
    <conflict type="frameshift">
        <sequence resource="EMBL-CDS" id="AAB62314"/>
    </conflict>
</comment>
<feature type="chain" id="PRO_0000049516" description="Uncharacterized protein YebD">
    <location>
        <begin position="1"/>
        <end position="55"/>
    </location>
</feature>
<feature type="sequence conflict" description="In Ref. 1; AAB62314." evidence="1" ref="1">
    <original>QK</original>
    <variation>HQ</variation>
    <location>
        <begin position="11"/>
        <end position="12"/>
    </location>
</feature>
<reference key="1">
    <citation type="journal article" date="1996" name="Microbiology">
        <title>The 52 degrees-55 degrees segment of the Bacillus subtilis chromosome: a region devoted to purine uptake and metabolism, and containing the genes cotA, gabP and guaA and the pur gene cluster within a 34960 bp nucleotide sequence.</title>
        <authorList>
            <person name="Borriss R."/>
            <person name="Porwollik S."/>
            <person name="Schroeter R."/>
        </authorList>
    </citation>
    <scope>NUCLEOTIDE SEQUENCE [GENOMIC DNA]</scope>
    <source>
        <strain>168</strain>
    </source>
</reference>
<reference key="2">
    <citation type="journal article" date="1997" name="Nature">
        <title>The complete genome sequence of the Gram-positive bacterium Bacillus subtilis.</title>
        <authorList>
            <person name="Kunst F."/>
            <person name="Ogasawara N."/>
            <person name="Moszer I."/>
            <person name="Albertini A.M."/>
            <person name="Alloni G."/>
            <person name="Azevedo V."/>
            <person name="Bertero M.G."/>
            <person name="Bessieres P."/>
            <person name="Bolotin A."/>
            <person name="Borchert S."/>
            <person name="Borriss R."/>
            <person name="Boursier L."/>
            <person name="Brans A."/>
            <person name="Braun M."/>
            <person name="Brignell S.C."/>
            <person name="Bron S."/>
            <person name="Brouillet S."/>
            <person name="Bruschi C.V."/>
            <person name="Caldwell B."/>
            <person name="Capuano V."/>
            <person name="Carter N.M."/>
            <person name="Choi S.-K."/>
            <person name="Codani J.-J."/>
            <person name="Connerton I.F."/>
            <person name="Cummings N.J."/>
            <person name="Daniel R.A."/>
            <person name="Denizot F."/>
            <person name="Devine K.M."/>
            <person name="Duesterhoeft A."/>
            <person name="Ehrlich S.D."/>
            <person name="Emmerson P.T."/>
            <person name="Entian K.-D."/>
            <person name="Errington J."/>
            <person name="Fabret C."/>
            <person name="Ferrari E."/>
            <person name="Foulger D."/>
            <person name="Fritz C."/>
            <person name="Fujita M."/>
            <person name="Fujita Y."/>
            <person name="Fuma S."/>
            <person name="Galizzi A."/>
            <person name="Galleron N."/>
            <person name="Ghim S.-Y."/>
            <person name="Glaser P."/>
            <person name="Goffeau A."/>
            <person name="Golightly E.J."/>
            <person name="Grandi G."/>
            <person name="Guiseppi G."/>
            <person name="Guy B.J."/>
            <person name="Haga K."/>
            <person name="Haiech J."/>
            <person name="Harwood C.R."/>
            <person name="Henaut A."/>
            <person name="Hilbert H."/>
            <person name="Holsappel S."/>
            <person name="Hosono S."/>
            <person name="Hullo M.-F."/>
            <person name="Itaya M."/>
            <person name="Jones L.-M."/>
            <person name="Joris B."/>
            <person name="Karamata D."/>
            <person name="Kasahara Y."/>
            <person name="Klaerr-Blanchard M."/>
            <person name="Klein C."/>
            <person name="Kobayashi Y."/>
            <person name="Koetter P."/>
            <person name="Koningstein G."/>
            <person name="Krogh S."/>
            <person name="Kumano M."/>
            <person name="Kurita K."/>
            <person name="Lapidus A."/>
            <person name="Lardinois S."/>
            <person name="Lauber J."/>
            <person name="Lazarevic V."/>
            <person name="Lee S.-M."/>
            <person name="Levine A."/>
            <person name="Liu H."/>
            <person name="Masuda S."/>
            <person name="Mauel C."/>
            <person name="Medigue C."/>
            <person name="Medina N."/>
            <person name="Mellado R.P."/>
            <person name="Mizuno M."/>
            <person name="Moestl D."/>
            <person name="Nakai S."/>
            <person name="Noback M."/>
            <person name="Noone D."/>
            <person name="O'Reilly M."/>
            <person name="Ogawa K."/>
            <person name="Ogiwara A."/>
            <person name="Oudega B."/>
            <person name="Park S.-H."/>
            <person name="Parro V."/>
            <person name="Pohl T.M."/>
            <person name="Portetelle D."/>
            <person name="Porwollik S."/>
            <person name="Prescott A.M."/>
            <person name="Presecan E."/>
            <person name="Pujic P."/>
            <person name="Purnelle B."/>
            <person name="Rapoport G."/>
            <person name="Rey M."/>
            <person name="Reynolds S."/>
            <person name="Rieger M."/>
            <person name="Rivolta C."/>
            <person name="Rocha E."/>
            <person name="Roche B."/>
            <person name="Rose M."/>
            <person name="Sadaie Y."/>
            <person name="Sato T."/>
            <person name="Scanlan E."/>
            <person name="Schleich S."/>
            <person name="Schroeter R."/>
            <person name="Scoffone F."/>
            <person name="Sekiguchi J."/>
            <person name="Sekowska A."/>
            <person name="Seror S.J."/>
            <person name="Serror P."/>
            <person name="Shin B.-S."/>
            <person name="Soldo B."/>
            <person name="Sorokin A."/>
            <person name="Tacconi E."/>
            <person name="Takagi T."/>
            <person name="Takahashi H."/>
            <person name="Takemaru K."/>
            <person name="Takeuchi M."/>
            <person name="Tamakoshi A."/>
            <person name="Tanaka T."/>
            <person name="Terpstra P."/>
            <person name="Tognoni A."/>
            <person name="Tosato V."/>
            <person name="Uchiyama S."/>
            <person name="Vandenbol M."/>
            <person name="Vannier F."/>
            <person name="Vassarotti A."/>
            <person name="Viari A."/>
            <person name="Wambutt R."/>
            <person name="Wedler E."/>
            <person name="Wedler H."/>
            <person name="Weitzenegger T."/>
            <person name="Winters P."/>
            <person name="Wipat A."/>
            <person name="Yamamoto H."/>
            <person name="Yamane K."/>
            <person name="Yasumoto K."/>
            <person name="Yata K."/>
            <person name="Yoshida K."/>
            <person name="Yoshikawa H.-F."/>
            <person name="Zumstein E."/>
            <person name="Yoshikawa H."/>
            <person name="Danchin A."/>
        </authorList>
    </citation>
    <scope>NUCLEOTIDE SEQUENCE [LARGE SCALE GENOMIC DNA]</scope>
    <source>
        <strain>168</strain>
    </source>
</reference>
<reference key="3">
    <citation type="journal article" date="1999" name="Genome Res.">
        <title>Detecting and analyzing DNA sequencing errors: toward a higher quality of the Bacillus subtilis genome sequence.</title>
        <authorList>
            <person name="Medigue C."/>
            <person name="Rose M."/>
            <person name="Viari A."/>
            <person name="Danchin A."/>
        </authorList>
    </citation>
    <scope>SEQUENCE REVISION</scope>
</reference>
<reference key="4">
    <citation type="journal article" date="2009" name="Microbiology">
        <title>From a consortium sequence to a unified sequence: the Bacillus subtilis 168 reference genome a decade later.</title>
        <authorList>
            <person name="Barbe V."/>
            <person name="Cruveiller S."/>
            <person name="Kunst F."/>
            <person name="Lenoble P."/>
            <person name="Meurice G."/>
            <person name="Sekowska A."/>
            <person name="Vallenet D."/>
            <person name="Wang T."/>
            <person name="Moszer I."/>
            <person name="Medigue C."/>
            <person name="Danchin A."/>
        </authorList>
    </citation>
    <scope>SEQUENCE REVISION TO 11-12 AND C-TERMINUS</scope>
</reference>
<proteinExistence type="predicted"/>